<gene>
    <name evidence="1" type="primary">rplF</name>
    <name type="ordered locus">MCA2357</name>
</gene>
<keyword id="KW-1185">Reference proteome</keyword>
<keyword id="KW-0687">Ribonucleoprotein</keyword>
<keyword id="KW-0689">Ribosomal protein</keyword>
<keyword id="KW-0694">RNA-binding</keyword>
<keyword id="KW-0699">rRNA-binding</keyword>
<evidence type="ECO:0000255" key="1">
    <source>
        <dbReference type="HAMAP-Rule" id="MF_01365"/>
    </source>
</evidence>
<evidence type="ECO:0000305" key="2"/>
<name>RL6_METCA</name>
<protein>
    <recommendedName>
        <fullName evidence="1">Large ribosomal subunit protein uL6</fullName>
    </recommendedName>
    <alternativeName>
        <fullName evidence="2">50S ribosomal protein L6</fullName>
    </alternativeName>
</protein>
<reference key="1">
    <citation type="journal article" date="2004" name="PLoS Biol.">
        <title>Genomic insights into methanotrophy: the complete genome sequence of Methylococcus capsulatus (Bath).</title>
        <authorList>
            <person name="Ward N.L."/>
            <person name="Larsen O."/>
            <person name="Sakwa J."/>
            <person name="Bruseth L."/>
            <person name="Khouri H.M."/>
            <person name="Durkin A.S."/>
            <person name="Dimitrov G."/>
            <person name="Jiang L."/>
            <person name="Scanlan D."/>
            <person name="Kang K.H."/>
            <person name="Lewis M.R."/>
            <person name="Nelson K.E."/>
            <person name="Methe B.A."/>
            <person name="Wu M."/>
            <person name="Heidelberg J.F."/>
            <person name="Paulsen I.T."/>
            <person name="Fouts D.E."/>
            <person name="Ravel J."/>
            <person name="Tettelin H."/>
            <person name="Ren Q."/>
            <person name="Read T.D."/>
            <person name="DeBoy R.T."/>
            <person name="Seshadri R."/>
            <person name="Salzberg S.L."/>
            <person name="Jensen H.B."/>
            <person name="Birkeland N.K."/>
            <person name="Nelson W.C."/>
            <person name="Dodson R.J."/>
            <person name="Grindhaug S.H."/>
            <person name="Holt I.E."/>
            <person name="Eidhammer I."/>
            <person name="Jonasen I."/>
            <person name="Vanaken S."/>
            <person name="Utterback T.R."/>
            <person name="Feldblyum T.V."/>
            <person name="Fraser C.M."/>
            <person name="Lillehaug J.R."/>
            <person name="Eisen J.A."/>
        </authorList>
    </citation>
    <scope>NUCLEOTIDE SEQUENCE [LARGE SCALE GENOMIC DNA]</scope>
    <source>
        <strain>ATCC 33009 / NCIMB 11132 / Bath</strain>
    </source>
</reference>
<sequence length="177" mass="18796">MSRVANNPISIPKGVEVTIADGIVTAKGKNGLLSRTVPAELGVDLEGGTLSIRYNKNDQRQNALAGTTRANLANMIVGVSNGFERKLSLVGVGYRAQAKGDVLSLSLGFSHPVEFKVPAGVVVETPSQTDIVVKGADRQVVGQVAADIRAFRAPEPYKGKGVRYADEVIIRKEAKKK</sequence>
<feature type="chain" id="PRO_0000260894" description="Large ribosomal subunit protein uL6">
    <location>
        <begin position="1"/>
        <end position="177"/>
    </location>
</feature>
<accession>Q605C7</accession>
<proteinExistence type="inferred from homology"/>
<organism>
    <name type="scientific">Methylococcus capsulatus (strain ATCC 33009 / NCIMB 11132 / Bath)</name>
    <dbReference type="NCBI Taxonomy" id="243233"/>
    <lineage>
        <taxon>Bacteria</taxon>
        <taxon>Pseudomonadati</taxon>
        <taxon>Pseudomonadota</taxon>
        <taxon>Gammaproteobacteria</taxon>
        <taxon>Methylococcales</taxon>
        <taxon>Methylococcaceae</taxon>
        <taxon>Methylococcus</taxon>
    </lineage>
</organism>
<dbReference type="EMBL" id="AE017282">
    <property type="protein sequence ID" value="AAU91484.1"/>
    <property type="molecule type" value="Genomic_DNA"/>
</dbReference>
<dbReference type="RefSeq" id="WP_010961585.1">
    <property type="nucleotide sequence ID" value="NC_002977.6"/>
</dbReference>
<dbReference type="SMR" id="Q605C7"/>
<dbReference type="STRING" id="243233.MCA2357"/>
<dbReference type="GeneID" id="88224559"/>
<dbReference type="KEGG" id="mca:MCA2357"/>
<dbReference type="eggNOG" id="COG0097">
    <property type="taxonomic scope" value="Bacteria"/>
</dbReference>
<dbReference type="HOGENOM" id="CLU_065464_1_2_6"/>
<dbReference type="Proteomes" id="UP000006821">
    <property type="component" value="Chromosome"/>
</dbReference>
<dbReference type="GO" id="GO:0022625">
    <property type="term" value="C:cytosolic large ribosomal subunit"/>
    <property type="evidence" value="ECO:0007669"/>
    <property type="project" value="TreeGrafter"/>
</dbReference>
<dbReference type="GO" id="GO:0019843">
    <property type="term" value="F:rRNA binding"/>
    <property type="evidence" value="ECO:0007669"/>
    <property type="project" value="UniProtKB-UniRule"/>
</dbReference>
<dbReference type="GO" id="GO:0003735">
    <property type="term" value="F:structural constituent of ribosome"/>
    <property type="evidence" value="ECO:0007669"/>
    <property type="project" value="InterPro"/>
</dbReference>
<dbReference type="GO" id="GO:0002181">
    <property type="term" value="P:cytoplasmic translation"/>
    <property type="evidence" value="ECO:0007669"/>
    <property type="project" value="TreeGrafter"/>
</dbReference>
<dbReference type="FunFam" id="3.90.930.12:FF:000001">
    <property type="entry name" value="50S ribosomal protein L6"/>
    <property type="match status" value="1"/>
</dbReference>
<dbReference type="Gene3D" id="3.90.930.12">
    <property type="entry name" value="Ribosomal protein L6, alpha-beta domain"/>
    <property type="match status" value="2"/>
</dbReference>
<dbReference type="HAMAP" id="MF_01365_B">
    <property type="entry name" value="Ribosomal_uL6_B"/>
    <property type="match status" value="1"/>
</dbReference>
<dbReference type="InterPro" id="IPR000702">
    <property type="entry name" value="Ribosomal_uL6-like"/>
</dbReference>
<dbReference type="InterPro" id="IPR036789">
    <property type="entry name" value="Ribosomal_uL6-like_a/b-dom_sf"/>
</dbReference>
<dbReference type="InterPro" id="IPR020040">
    <property type="entry name" value="Ribosomal_uL6_a/b-dom"/>
</dbReference>
<dbReference type="InterPro" id="IPR019906">
    <property type="entry name" value="Ribosomal_uL6_bac-type"/>
</dbReference>
<dbReference type="InterPro" id="IPR002358">
    <property type="entry name" value="Ribosomal_uL6_CS"/>
</dbReference>
<dbReference type="NCBIfam" id="TIGR03654">
    <property type="entry name" value="L6_bact"/>
    <property type="match status" value="1"/>
</dbReference>
<dbReference type="PANTHER" id="PTHR11655">
    <property type="entry name" value="60S/50S RIBOSOMAL PROTEIN L6/L9"/>
    <property type="match status" value="1"/>
</dbReference>
<dbReference type="PANTHER" id="PTHR11655:SF14">
    <property type="entry name" value="LARGE RIBOSOMAL SUBUNIT PROTEIN UL6M"/>
    <property type="match status" value="1"/>
</dbReference>
<dbReference type="Pfam" id="PF00347">
    <property type="entry name" value="Ribosomal_L6"/>
    <property type="match status" value="2"/>
</dbReference>
<dbReference type="PIRSF" id="PIRSF002162">
    <property type="entry name" value="Ribosomal_L6"/>
    <property type="match status" value="1"/>
</dbReference>
<dbReference type="PRINTS" id="PR00059">
    <property type="entry name" value="RIBOSOMALL6"/>
</dbReference>
<dbReference type="SUPFAM" id="SSF56053">
    <property type="entry name" value="Ribosomal protein L6"/>
    <property type="match status" value="2"/>
</dbReference>
<dbReference type="PROSITE" id="PS00525">
    <property type="entry name" value="RIBOSOMAL_L6_1"/>
    <property type="match status" value="1"/>
</dbReference>
<comment type="function">
    <text evidence="1">This protein binds to the 23S rRNA, and is important in its secondary structure. It is located near the subunit interface in the base of the L7/L12 stalk, and near the tRNA binding site of the peptidyltransferase center.</text>
</comment>
<comment type="subunit">
    <text evidence="1">Part of the 50S ribosomal subunit.</text>
</comment>
<comment type="similarity">
    <text evidence="1">Belongs to the universal ribosomal protein uL6 family.</text>
</comment>